<accession>A7UKV4</accession>
<gene>
    <name type="primary">DPP5</name>
</gene>
<proteinExistence type="inferred from homology"/>
<sequence length="726" mass="80073">MAAAKWLIASLAFASSGLAFTPEDFISAPRRGEAIPDPKGELAVFHVSKYNFDKKDRPSGWNLLNLKNGDISVLTTDSDISEITWLGDGTKIVYVNGTDSVKGGVGIWISDAKNFGNAYKAGSVNGAFSGLKLAKSGDKINFVGYGQSTTKGDLYNEAAAKEAVSSARIYDSLFVRHWDTYVGTQFNAVFSGALTKSGDKYSFDGKLKNLVHPVKYAESPYPPFGGSGDYDLSSDGKTVAFMSKAPELPKANLTTTYIFVVPHDGSRVAEPINKRNGPRTPQAIEGASSSPVFSPDGKRIAYLQMATKNYESDRRVIHIAEVGSNKPVQRIASNWDRSPEVVKWSSDGRTLYVTAEDHATGKLFTLPADARDSHKPAVVKHDGSVSSFYFVGSSKSVLISGNSLWSNALFQVATPGRPNRKLFYANEHDPELKGLGPNDIEPLWVDGARTKIHSWIVKPTGFDKNKVYPLAFLIHGGPQGSWGDSWSTRWNPRVWADQGYVVVAPNPTGSTGFGQKLTDDITNDWGGAPYKDLVKIWEHVRDHIKYIDTDNGIAAGASFGGFMVNWIQGHDLGRKFKALVSHDGTFVGSSKIGTDELFFIEHDFNGTFFEARQNYDRWDCSKPELVAKWSTPQLVIHNDFDFRLSVAEGVGLFNVLQEKGIPSRFLNFPDETHWVTKPENSLVWHQQVLGWINKWSGINKSNPKSIKLSDCPIEVVDHEAHSYFDY</sequence>
<evidence type="ECO:0000250" key="1"/>
<evidence type="ECO:0000255" key="2"/>
<evidence type="ECO:0000256" key="3">
    <source>
        <dbReference type="SAM" id="MobiDB-lite"/>
    </source>
</evidence>
<evidence type="ECO:0000305" key="4"/>
<reference key="1">
    <citation type="submission" date="2007-07" db="EMBL/GenBank/DDBJ databases">
        <title>Comparing putative pathogenicity factors between Trichophyton tonsurans and Trichophyton equinum.</title>
        <authorList>
            <person name="Brown J.T."/>
            <person name="Preuett B.L."/>
            <person name="Abdel-Rahman S.M."/>
        </authorList>
    </citation>
    <scope>NUCLEOTIDE SEQUENCE [GENOMIC DNA]</scope>
</reference>
<organism>
    <name type="scientific">Trichophyton equinum</name>
    <name type="common">Horse ringworm fungus</name>
    <dbReference type="NCBI Taxonomy" id="63418"/>
    <lineage>
        <taxon>Eukaryota</taxon>
        <taxon>Fungi</taxon>
        <taxon>Dikarya</taxon>
        <taxon>Ascomycota</taxon>
        <taxon>Pezizomycotina</taxon>
        <taxon>Eurotiomycetes</taxon>
        <taxon>Eurotiomycetidae</taxon>
        <taxon>Onygenales</taxon>
        <taxon>Arthrodermataceae</taxon>
        <taxon>Trichophyton</taxon>
    </lineage>
</organism>
<protein>
    <recommendedName>
        <fullName>Dipeptidyl-peptidase 5</fullName>
        <ecNumber>3.4.14.-</ecNumber>
    </recommendedName>
    <alternativeName>
        <fullName>Dipeptidyl-peptidase V</fullName>
        <shortName>DPP V</shortName>
        <shortName>DppV</shortName>
    </alternativeName>
</protein>
<keyword id="KW-0031">Aminopeptidase</keyword>
<keyword id="KW-0325">Glycoprotein</keyword>
<keyword id="KW-0378">Hydrolase</keyword>
<keyword id="KW-0645">Protease</keyword>
<keyword id="KW-0964">Secreted</keyword>
<keyword id="KW-0720">Serine protease</keyword>
<keyword id="KW-0732">Signal</keyword>
<keyword id="KW-0843">Virulence</keyword>
<dbReference type="EC" id="3.4.14.-"/>
<dbReference type="EMBL" id="EU076569">
    <property type="protein sequence ID" value="ABU50379.1"/>
    <property type="molecule type" value="Genomic_DNA"/>
</dbReference>
<dbReference type="SMR" id="A7UKV4"/>
<dbReference type="ESTHER" id="artbe-DPP5">
    <property type="family name" value="Prolyl_oligopeptidase_S9"/>
</dbReference>
<dbReference type="MEROPS" id="S09.012"/>
<dbReference type="GlyCosmos" id="A7UKV4">
    <property type="glycosylation" value="4 sites, No reported glycans"/>
</dbReference>
<dbReference type="VEuPathDB" id="FungiDB:TEQG_02326"/>
<dbReference type="GO" id="GO:0005576">
    <property type="term" value="C:extracellular region"/>
    <property type="evidence" value="ECO:0007669"/>
    <property type="project" value="UniProtKB-SubCell"/>
</dbReference>
<dbReference type="GO" id="GO:0004177">
    <property type="term" value="F:aminopeptidase activity"/>
    <property type="evidence" value="ECO:0007669"/>
    <property type="project" value="UniProtKB-KW"/>
</dbReference>
<dbReference type="GO" id="GO:0004252">
    <property type="term" value="F:serine-type endopeptidase activity"/>
    <property type="evidence" value="ECO:0007669"/>
    <property type="project" value="TreeGrafter"/>
</dbReference>
<dbReference type="GO" id="GO:0006508">
    <property type="term" value="P:proteolysis"/>
    <property type="evidence" value="ECO:0007669"/>
    <property type="project" value="UniProtKB-KW"/>
</dbReference>
<dbReference type="FunFam" id="3.40.50.1820:FF:000028">
    <property type="entry name" value="S9 family peptidase"/>
    <property type="match status" value="1"/>
</dbReference>
<dbReference type="Gene3D" id="3.40.50.1820">
    <property type="entry name" value="alpha/beta hydrolase"/>
    <property type="match status" value="1"/>
</dbReference>
<dbReference type="Gene3D" id="2.120.10.30">
    <property type="entry name" value="TolB, C-terminal domain"/>
    <property type="match status" value="1"/>
</dbReference>
<dbReference type="InterPro" id="IPR011042">
    <property type="entry name" value="6-blade_b-propeller_TolB-like"/>
</dbReference>
<dbReference type="InterPro" id="IPR029058">
    <property type="entry name" value="AB_hydrolase_fold"/>
</dbReference>
<dbReference type="InterPro" id="IPR011659">
    <property type="entry name" value="PD40"/>
</dbReference>
<dbReference type="InterPro" id="IPR001375">
    <property type="entry name" value="Peptidase_S9_cat"/>
</dbReference>
<dbReference type="PANTHER" id="PTHR42776:SF11">
    <property type="entry name" value="DIPEPTIDYL-PEPTIDASE 5-RELATED"/>
    <property type="match status" value="1"/>
</dbReference>
<dbReference type="PANTHER" id="PTHR42776">
    <property type="entry name" value="SERINE PEPTIDASE S9 FAMILY MEMBER"/>
    <property type="match status" value="1"/>
</dbReference>
<dbReference type="Pfam" id="PF07676">
    <property type="entry name" value="PD40"/>
    <property type="match status" value="1"/>
</dbReference>
<dbReference type="Pfam" id="PF00326">
    <property type="entry name" value="Peptidase_S9"/>
    <property type="match status" value="1"/>
</dbReference>
<dbReference type="SUPFAM" id="SSF53474">
    <property type="entry name" value="alpha/beta-Hydrolases"/>
    <property type="match status" value="1"/>
</dbReference>
<dbReference type="SUPFAM" id="SSF82171">
    <property type="entry name" value="DPP6 N-terminal domain-like"/>
    <property type="match status" value="1"/>
</dbReference>
<name>DPP5_TRIEQ</name>
<feature type="signal peptide" evidence="2">
    <location>
        <begin position="1"/>
        <end position="19"/>
    </location>
</feature>
<feature type="chain" id="PRO_0000384092" description="Dipeptidyl-peptidase 5">
    <location>
        <begin position="20"/>
        <end position="726"/>
    </location>
</feature>
<feature type="region of interest" description="Disordered" evidence="3">
    <location>
        <begin position="269"/>
        <end position="291"/>
    </location>
</feature>
<feature type="active site" description="Charge relay system" evidence="1">
    <location>
        <position position="558"/>
    </location>
</feature>
<feature type="active site" description="Charge relay system" evidence="1">
    <location>
        <position position="641"/>
    </location>
</feature>
<feature type="active site" description="Charge relay system" evidence="1">
    <location>
        <position position="673"/>
    </location>
</feature>
<feature type="glycosylation site" description="N-linked (GlcNAc...) asparagine" evidence="2">
    <location>
        <position position="96"/>
    </location>
</feature>
<feature type="glycosylation site" description="N-linked (GlcNAc...) asparagine" evidence="2">
    <location>
        <position position="252"/>
    </location>
</feature>
<feature type="glycosylation site" description="N-linked (GlcNAc...) asparagine" evidence="2">
    <location>
        <position position="605"/>
    </location>
</feature>
<feature type="glycosylation site" description="N-linked (GlcNAc...) asparagine" evidence="2">
    <location>
        <position position="699"/>
    </location>
</feature>
<comment type="function">
    <text evidence="1">Extracellular dipeptidyl-peptidase which removes N-terminal dipeptides sequentially from polypeptides having unsubstituted N-termini. Contributes to pathogenicity (By similarity).</text>
</comment>
<comment type="subcellular location">
    <subcellularLocation>
        <location evidence="1">Secreted</location>
    </subcellularLocation>
</comment>
<comment type="similarity">
    <text evidence="4">Belongs to the peptidase S9C family.</text>
</comment>